<reference key="1">
    <citation type="submission" date="2007-06" db="EMBL/GenBank/DDBJ databases">
        <authorList>
            <person name="Dodson R.J."/>
            <person name="Harkins D."/>
            <person name="Paulsen I.T."/>
        </authorList>
    </citation>
    <scope>NUCLEOTIDE SEQUENCE [LARGE SCALE GENOMIC DNA]</scope>
    <source>
        <strain>DSM 24068 / PA7</strain>
    </source>
</reference>
<organism>
    <name type="scientific">Pseudomonas paraeruginosa (strain DSM 24068 / PA7)</name>
    <name type="common">Pseudomonas aeruginosa (strain PA7)</name>
    <dbReference type="NCBI Taxonomy" id="381754"/>
    <lineage>
        <taxon>Bacteria</taxon>
        <taxon>Pseudomonadati</taxon>
        <taxon>Pseudomonadota</taxon>
        <taxon>Gammaproteobacteria</taxon>
        <taxon>Pseudomonadales</taxon>
        <taxon>Pseudomonadaceae</taxon>
        <taxon>Pseudomonas</taxon>
        <taxon>Pseudomonas paraeruginosa</taxon>
    </lineage>
</organism>
<feature type="chain" id="PRO_1000001803" description="Phosphate acyltransferase">
    <location>
        <begin position="1"/>
        <end position="336"/>
    </location>
</feature>
<protein>
    <recommendedName>
        <fullName evidence="1">Phosphate acyltransferase</fullName>
        <ecNumber evidence="1">2.3.1.274</ecNumber>
    </recommendedName>
    <alternativeName>
        <fullName evidence="1">Acyl-ACP phosphotransacylase</fullName>
    </alternativeName>
    <alternativeName>
        <fullName evidence="1">Acyl-[acyl-carrier-protein]--phosphate acyltransferase</fullName>
    </alternativeName>
    <alternativeName>
        <fullName evidence="1">Phosphate-acyl-ACP acyltransferase</fullName>
    </alternativeName>
</protein>
<evidence type="ECO:0000255" key="1">
    <source>
        <dbReference type="HAMAP-Rule" id="MF_00019"/>
    </source>
</evidence>
<name>PLSX_PSEP7</name>
<proteinExistence type="inferred from homology"/>
<keyword id="KW-0963">Cytoplasm</keyword>
<keyword id="KW-0444">Lipid biosynthesis</keyword>
<keyword id="KW-0443">Lipid metabolism</keyword>
<keyword id="KW-0594">Phospholipid biosynthesis</keyword>
<keyword id="KW-1208">Phospholipid metabolism</keyword>
<keyword id="KW-0808">Transferase</keyword>
<dbReference type="EC" id="2.3.1.274" evidence="1"/>
<dbReference type="EMBL" id="CP000744">
    <property type="protein sequence ID" value="ABR84981.1"/>
    <property type="molecule type" value="Genomic_DNA"/>
</dbReference>
<dbReference type="RefSeq" id="WP_012075173.1">
    <property type="nucleotide sequence ID" value="NC_009656.1"/>
</dbReference>
<dbReference type="SMR" id="A6V3C9"/>
<dbReference type="KEGG" id="pap:PSPA7_2192"/>
<dbReference type="HOGENOM" id="CLU_039379_1_0_6"/>
<dbReference type="UniPathway" id="UPA00085"/>
<dbReference type="Proteomes" id="UP000001582">
    <property type="component" value="Chromosome"/>
</dbReference>
<dbReference type="GO" id="GO:0005737">
    <property type="term" value="C:cytoplasm"/>
    <property type="evidence" value="ECO:0007669"/>
    <property type="project" value="UniProtKB-SubCell"/>
</dbReference>
<dbReference type="GO" id="GO:0043811">
    <property type="term" value="F:phosphate:acyl-[acyl carrier protein] acyltransferase activity"/>
    <property type="evidence" value="ECO:0007669"/>
    <property type="project" value="UniProtKB-UniRule"/>
</dbReference>
<dbReference type="GO" id="GO:0006633">
    <property type="term" value="P:fatty acid biosynthetic process"/>
    <property type="evidence" value="ECO:0007669"/>
    <property type="project" value="UniProtKB-UniRule"/>
</dbReference>
<dbReference type="GO" id="GO:0008654">
    <property type="term" value="P:phospholipid biosynthetic process"/>
    <property type="evidence" value="ECO:0007669"/>
    <property type="project" value="UniProtKB-KW"/>
</dbReference>
<dbReference type="Gene3D" id="3.40.718.10">
    <property type="entry name" value="Isopropylmalate Dehydrogenase"/>
    <property type="match status" value="1"/>
</dbReference>
<dbReference type="HAMAP" id="MF_00019">
    <property type="entry name" value="PlsX"/>
    <property type="match status" value="1"/>
</dbReference>
<dbReference type="InterPro" id="IPR003664">
    <property type="entry name" value="FA_synthesis"/>
</dbReference>
<dbReference type="InterPro" id="IPR012281">
    <property type="entry name" value="Phospholipid_synth_PlsX-like"/>
</dbReference>
<dbReference type="NCBIfam" id="TIGR00182">
    <property type="entry name" value="plsX"/>
    <property type="match status" value="1"/>
</dbReference>
<dbReference type="PANTHER" id="PTHR30100">
    <property type="entry name" value="FATTY ACID/PHOSPHOLIPID SYNTHESIS PROTEIN PLSX"/>
    <property type="match status" value="1"/>
</dbReference>
<dbReference type="PANTHER" id="PTHR30100:SF1">
    <property type="entry name" value="PHOSPHATE ACYLTRANSFERASE"/>
    <property type="match status" value="1"/>
</dbReference>
<dbReference type="Pfam" id="PF02504">
    <property type="entry name" value="FA_synthesis"/>
    <property type="match status" value="1"/>
</dbReference>
<dbReference type="PIRSF" id="PIRSF002465">
    <property type="entry name" value="Phsphlp_syn_PlsX"/>
    <property type="match status" value="1"/>
</dbReference>
<dbReference type="SUPFAM" id="SSF53659">
    <property type="entry name" value="Isocitrate/Isopropylmalate dehydrogenase-like"/>
    <property type="match status" value="1"/>
</dbReference>
<sequence>MFAPIIAIDAMGGDFGPHCVVPASIAFLAENPSSQLILVGQPALLEELLSRHPSLDRQRLRVHAASEVIGSDERPSQALRGKPDASMRVALELVRDGCAQACVSAGNTGALMALSRHLLKTLPGIDRPAMVTAVPTEKGHCHLLDLGANVDCSAEHLYQFAVMGAVAAEALGCASPRVALLNVGVEEIKGNQQVKLAASLLQKAEGLNFAGYIEGDGLYRGEADVVVCDGFVGNILLKASEGLAAMVSARIEQRFRDGLAAKLVGALALPLLRRLRGDIAPARYNGASFLGLQGIVVKSHGSAAEEGFQSALRRAALEVRENLPQRLHGRLEHLLL</sequence>
<gene>
    <name evidence="1" type="primary">plsX</name>
    <name type="ordered locus">PSPA7_2192</name>
</gene>
<comment type="function">
    <text evidence="1">Catalyzes the reversible formation of acyl-phosphate (acyl-PO(4)) from acyl-[acyl-carrier-protein] (acyl-ACP). This enzyme utilizes acyl-ACP as fatty acyl donor, but not acyl-CoA.</text>
</comment>
<comment type="catalytic activity">
    <reaction evidence="1">
        <text>a fatty acyl-[ACP] + phosphate = an acyl phosphate + holo-[ACP]</text>
        <dbReference type="Rhea" id="RHEA:42292"/>
        <dbReference type="Rhea" id="RHEA-COMP:9685"/>
        <dbReference type="Rhea" id="RHEA-COMP:14125"/>
        <dbReference type="ChEBI" id="CHEBI:43474"/>
        <dbReference type="ChEBI" id="CHEBI:59918"/>
        <dbReference type="ChEBI" id="CHEBI:64479"/>
        <dbReference type="ChEBI" id="CHEBI:138651"/>
        <dbReference type="EC" id="2.3.1.274"/>
    </reaction>
</comment>
<comment type="pathway">
    <text evidence="1">Lipid metabolism; phospholipid metabolism.</text>
</comment>
<comment type="subunit">
    <text evidence="1">Homodimer. Probably interacts with PlsY.</text>
</comment>
<comment type="subcellular location">
    <subcellularLocation>
        <location evidence="1">Cytoplasm</location>
    </subcellularLocation>
    <text evidence="1">Associated with the membrane possibly through PlsY.</text>
</comment>
<comment type="similarity">
    <text evidence="1">Belongs to the PlsX family.</text>
</comment>
<accession>A6V3C9</accession>